<name>SELO_ECOK1</name>
<gene>
    <name evidence="1" type="primary">ydiU</name>
    <name evidence="1" type="synonym">selO</name>
    <name type="ordered locus">Ecok1_15880</name>
    <name type="ORF">APECO1_781</name>
</gene>
<feature type="chain" id="PRO_1000045247" description="Protein nucleotidyltransferase YdiU">
    <location>
        <begin position="1"/>
        <end position="478"/>
    </location>
</feature>
<feature type="active site" description="Proton acceptor" evidence="1">
    <location>
        <position position="246"/>
    </location>
</feature>
<feature type="binding site" evidence="1">
    <location>
        <position position="84"/>
    </location>
    <ligand>
        <name>ATP</name>
        <dbReference type="ChEBI" id="CHEBI:30616"/>
    </ligand>
</feature>
<feature type="binding site" evidence="1">
    <location>
        <position position="86"/>
    </location>
    <ligand>
        <name>ATP</name>
        <dbReference type="ChEBI" id="CHEBI:30616"/>
    </ligand>
</feature>
<feature type="binding site" evidence="1">
    <location>
        <position position="87"/>
    </location>
    <ligand>
        <name>ATP</name>
        <dbReference type="ChEBI" id="CHEBI:30616"/>
    </ligand>
</feature>
<feature type="binding site" evidence="1">
    <location>
        <position position="107"/>
    </location>
    <ligand>
        <name>ATP</name>
        <dbReference type="ChEBI" id="CHEBI:30616"/>
    </ligand>
</feature>
<feature type="binding site" evidence="1">
    <location>
        <position position="119"/>
    </location>
    <ligand>
        <name>ATP</name>
        <dbReference type="ChEBI" id="CHEBI:30616"/>
    </ligand>
</feature>
<feature type="binding site" evidence="1">
    <location>
        <position position="120"/>
    </location>
    <ligand>
        <name>ATP</name>
        <dbReference type="ChEBI" id="CHEBI:30616"/>
    </ligand>
</feature>
<feature type="binding site" evidence="1">
    <location>
        <position position="170"/>
    </location>
    <ligand>
        <name>ATP</name>
        <dbReference type="ChEBI" id="CHEBI:30616"/>
    </ligand>
</feature>
<feature type="binding site" evidence="1">
    <location>
        <position position="177"/>
    </location>
    <ligand>
        <name>ATP</name>
        <dbReference type="ChEBI" id="CHEBI:30616"/>
    </ligand>
</feature>
<feature type="binding site" evidence="1">
    <location>
        <position position="247"/>
    </location>
    <ligand>
        <name>Mg(2+)</name>
        <dbReference type="ChEBI" id="CHEBI:18420"/>
    </ligand>
</feature>
<feature type="binding site" evidence="1">
    <location>
        <position position="256"/>
    </location>
    <ligand>
        <name>ATP</name>
        <dbReference type="ChEBI" id="CHEBI:30616"/>
    </ligand>
</feature>
<feature type="binding site" evidence="1">
    <location>
        <position position="256"/>
    </location>
    <ligand>
        <name>Mg(2+)</name>
        <dbReference type="ChEBI" id="CHEBI:18420"/>
    </ligand>
</feature>
<accession>A1ABP2</accession>
<comment type="function">
    <text evidence="1">Nucleotidyltransferase involved in the post-translational modification of proteins. It can catalyze the addition of adenosine monophosphate (AMP) or uridine monophosphate (UMP) to a protein, resulting in modifications known as AMPylation and UMPylation.</text>
</comment>
<comment type="catalytic activity">
    <reaction evidence="1">
        <text>L-seryl-[protein] + ATP = 3-O-(5'-adenylyl)-L-seryl-[protein] + diphosphate</text>
        <dbReference type="Rhea" id="RHEA:58120"/>
        <dbReference type="Rhea" id="RHEA-COMP:9863"/>
        <dbReference type="Rhea" id="RHEA-COMP:15073"/>
        <dbReference type="ChEBI" id="CHEBI:29999"/>
        <dbReference type="ChEBI" id="CHEBI:30616"/>
        <dbReference type="ChEBI" id="CHEBI:33019"/>
        <dbReference type="ChEBI" id="CHEBI:142516"/>
        <dbReference type="EC" id="2.7.7.108"/>
    </reaction>
</comment>
<comment type="catalytic activity">
    <reaction evidence="1">
        <text>L-threonyl-[protein] + ATP = 3-O-(5'-adenylyl)-L-threonyl-[protein] + diphosphate</text>
        <dbReference type="Rhea" id="RHEA:54292"/>
        <dbReference type="Rhea" id="RHEA-COMP:11060"/>
        <dbReference type="Rhea" id="RHEA-COMP:13847"/>
        <dbReference type="ChEBI" id="CHEBI:30013"/>
        <dbReference type="ChEBI" id="CHEBI:30616"/>
        <dbReference type="ChEBI" id="CHEBI:33019"/>
        <dbReference type="ChEBI" id="CHEBI:138113"/>
        <dbReference type="EC" id="2.7.7.108"/>
    </reaction>
</comment>
<comment type="catalytic activity">
    <reaction evidence="1">
        <text>L-tyrosyl-[protein] + ATP = O-(5'-adenylyl)-L-tyrosyl-[protein] + diphosphate</text>
        <dbReference type="Rhea" id="RHEA:54288"/>
        <dbReference type="Rhea" id="RHEA-COMP:10136"/>
        <dbReference type="Rhea" id="RHEA-COMP:13846"/>
        <dbReference type="ChEBI" id="CHEBI:30616"/>
        <dbReference type="ChEBI" id="CHEBI:33019"/>
        <dbReference type="ChEBI" id="CHEBI:46858"/>
        <dbReference type="ChEBI" id="CHEBI:83624"/>
        <dbReference type="EC" id="2.7.7.108"/>
    </reaction>
</comment>
<comment type="catalytic activity">
    <reaction evidence="1">
        <text>L-histidyl-[protein] + UTP = N(tele)-(5'-uridylyl)-L-histidyl-[protein] + diphosphate</text>
        <dbReference type="Rhea" id="RHEA:83891"/>
        <dbReference type="Rhea" id="RHEA-COMP:9745"/>
        <dbReference type="Rhea" id="RHEA-COMP:20239"/>
        <dbReference type="ChEBI" id="CHEBI:29979"/>
        <dbReference type="ChEBI" id="CHEBI:33019"/>
        <dbReference type="ChEBI" id="CHEBI:46398"/>
        <dbReference type="ChEBI" id="CHEBI:233474"/>
    </reaction>
</comment>
<comment type="catalytic activity">
    <reaction evidence="1">
        <text>L-seryl-[protein] + UTP = O-(5'-uridylyl)-L-seryl-[protein] + diphosphate</text>
        <dbReference type="Rhea" id="RHEA:64604"/>
        <dbReference type="Rhea" id="RHEA-COMP:9863"/>
        <dbReference type="Rhea" id="RHEA-COMP:16635"/>
        <dbReference type="ChEBI" id="CHEBI:29999"/>
        <dbReference type="ChEBI" id="CHEBI:33019"/>
        <dbReference type="ChEBI" id="CHEBI:46398"/>
        <dbReference type="ChEBI" id="CHEBI:156051"/>
    </reaction>
</comment>
<comment type="catalytic activity">
    <reaction evidence="1">
        <text>L-tyrosyl-[protein] + UTP = O-(5'-uridylyl)-L-tyrosyl-[protein] + diphosphate</text>
        <dbReference type="Rhea" id="RHEA:83887"/>
        <dbReference type="Rhea" id="RHEA-COMP:10136"/>
        <dbReference type="Rhea" id="RHEA-COMP:20238"/>
        <dbReference type="ChEBI" id="CHEBI:33019"/>
        <dbReference type="ChEBI" id="CHEBI:46398"/>
        <dbReference type="ChEBI" id="CHEBI:46858"/>
        <dbReference type="ChEBI" id="CHEBI:90602"/>
    </reaction>
</comment>
<comment type="cofactor">
    <cofactor evidence="1">
        <name>Mg(2+)</name>
        <dbReference type="ChEBI" id="CHEBI:18420"/>
    </cofactor>
    <cofactor evidence="1">
        <name>Mn(2+)</name>
        <dbReference type="ChEBI" id="CHEBI:29035"/>
    </cofactor>
</comment>
<comment type="similarity">
    <text evidence="1">Belongs to the SELO family.</text>
</comment>
<reference key="1">
    <citation type="journal article" date="2007" name="J. Bacteriol.">
        <title>The genome sequence of avian pathogenic Escherichia coli strain O1:K1:H7 shares strong similarities with human extraintestinal pathogenic E. coli genomes.</title>
        <authorList>
            <person name="Johnson T.J."/>
            <person name="Kariyawasam S."/>
            <person name="Wannemuehler Y."/>
            <person name="Mangiamele P."/>
            <person name="Johnson S.J."/>
            <person name="Doetkott C."/>
            <person name="Skyberg J.A."/>
            <person name="Lynne A.M."/>
            <person name="Johnson J.R."/>
            <person name="Nolan L.K."/>
        </authorList>
    </citation>
    <scope>NUCLEOTIDE SEQUENCE [LARGE SCALE GENOMIC DNA]</scope>
</reference>
<keyword id="KW-0067">ATP-binding</keyword>
<keyword id="KW-0460">Magnesium</keyword>
<keyword id="KW-0464">Manganese</keyword>
<keyword id="KW-0479">Metal-binding</keyword>
<keyword id="KW-0547">Nucleotide-binding</keyword>
<keyword id="KW-0548">Nucleotidyltransferase</keyword>
<keyword id="KW-1185">Reference proteome</keyword>
<keyword id="KW-0808">Transferase</keyword>
<evidence type="ECO:0000255" key="1">
    <source>
        <dbReference type="HAMAP-Rule" id="MF_00692"/>
    </source>
</evidence>
<sequence>MTLSFITRWRDELPETYTALSPTPLNNARLIWHNTELANTLSIPSSLFKNGAGVWGGENLLPGMSPLAQVYSGHQFGVWAGQLGDGRGILLGEQLLADGTTMDWHLKGAGLTPYSRMGDGRAVLRSTIRESLASEAMHYLGIPTTRALSIVTSDSPVYRETVESGAMLMRVAPSHLRFGHFEHFYYRREPEKVRQLADFAIRHYWSHLDDEEDKYRLWFTDVVARTASLIAQWQTVGFAHGVMNTDNMSLLGLTLDYGPFGFLDDYEPGFICNHSDHQGRYSFDNQPAVALWNLQRLAQTLSPFVAVDALNEALDSYQQVLLTHYGQRMRQKLGFMTEQKEDNALLNELFSLMARERSDYTRTFRMLSLTEQHSAASPLRDEFIDRAAFDDWFARYRGRLQQDEITDSERQQLMQSVNPALVLRNWLAQRAIEAAEKDDMTELHRLHEALRNPFSDRDDDYVSRPPDWGKRLEVSCSS</sequence>
<proteinExistence type="inferred from homology"/>
<protein>
    <recommendedName>
        <fullName evidence="1">Protein nucleotidyltransferase YdiU</fullName>
        <ecNumber evidence="1">2.7.7.-</ecNumber>
    </recommendedName>
    <alternativeName>
        <fullName evidence="1">Protein adenylyltransferase YdiU</fullName>
        <ecNumber evidence="1">2.7.7.108</ecNumber>
    </alternativeName>
    <alternativeName>
        <fullName evidence="1">Protein uridylyltransferase YdiU</fullName>
        <ecNumber evidence="1">2.7.7.-</ecNumber>
    </alternativeName>
</protein>
<organism>
    <name type="scientific">Escherichia coli O1:K1 / APEC</name>
    <dbReference type="NCBI Taxonomy" id="405955"/>
    <lineage>
        <taxon>Bacteria</taxon>
        <taxon>Pseudomonadati</taxon>
        <taxon>Pseudomonadota</taxon>
        <taxon>Gammaproteobacteria</taxon>
        <taxon>Enterobacterales</taxon>
        <taxon>Enterobacteriaceae</taxon>
        <taxon>Escherichia</taxon>
    </lineage>
</organism>
<dbReference type="EC" id="2.7.7.-" evidence="1"/>
<dbReference type="EC" id="2.7.7.108" evidence="1"/>
<dbReference type="EMBL" id="CP000468">
    <property type="protein sequence ID" value="ABJ01082.1"/>
    <property type="molecule type" value="Genomic_DNA"/>
</dbReference>
<dbReference type="RefSeq" id="WP_000175635.1">
    <property type="nucleotide sequence ID" value="NZ_CADILS010000002.1"/>
</dbReference>
<dbReference type="SMR" id="A1ABP2"/>
<dbReference type="KEGG" id="ecv:APECO1_781"/>
<dbReference type="HOGENOM" id="CLU_010245_4_0_6"/>
<dbReference type="Proteomes" id="UP000008216">
    <property type="component" value="Chromosome"/>
</dbReference>
<dbReference type="GO" id="GO:0070733">
    <property type="term" value="F:AMPylase activity"/>
    <property type="evidence" value="ECO:0007669"/>
    <property type="project" value="TreeGrafter"/>
</dbReference>
<dbReference type="GO" id="GO:0005524">
    <property type="term" value="F:ATP binding"/>
    <property type="evidence" value="ECO:0007669"/>
    <property type="project" value="UniProtKB-UniRule"/>
</dbReference>
<dbReference type="GO" id="GO:0000287">
    <property type="term" value="F:magnesium ion binding"/>
    <property type="evidence" value="ECO:0007669"/>
    <property type="project" value="UniProtKB-UniRule"/>
</dbReference>
<dbReference type="HAMAP" id="MF_00692">
    <property type="entry name" value="YdiU_SelO"/>
    <property type="match status" value="1"/>
</dbReference>
<dbReference type="InterPro" id="IPR054838">
    <property type="entry name" value="adnlytase_SelO"/>
</dbReference>
<dbReference type="InterPro" id="IPR003846">
    <property type="entry name" value="SelO"/>
</dbReference>
<dbReference type="NCBIfam" id="NF040880">
    <property type="entry name" value="adnlytase_SelO"/>
    <property type="match status" value="1"/>
</dbReference>
<dbReference type="NCBIfam" id="NF000658">
    <property type="entry name" value="PRK00029.1"/>
    <property type="match status" value="1"/>
</dbReference>
<dbReference type="PANTHER" id="PTHR32057">
    <property type="entry name" value="PROTEIN ADENYLYLTRANSFERASE SELO, MITOCHONDRIAL"/>
    <property type="match status" value="1"/>
</dbReference>
<dbReference type="PANTHER" id="PTHR32057:SF14">
    <property type="entry name" value="PROTEIN ADENYLYLTRANSFERASE SELO, MITOCHONDRIAL"/>
    <property type="match status" value="1"/>
</dbReference>
<dbReference type="Pfam" id="PF02696">
    <property type="entry name" value="SelO"/>
    <property type="match status" value="1"/>
</dbReference>